<organism>
    <name type="scientific">Aggregatibacter actinomycetemcomitans</name>
    <name type="common">Actinobacillus actinomycetemcomitans</name>
    <name type="synonym">Haemophilus actinomycetemcomitans</name>
    <dbReference type="NCBI Taxonomy" id="714"/>
    <lineage>
        <taxon>Bacteria</taxon>
        <taxon>Pseudomonadati</taxon>
        <taxon>Pseudomonadota</taxon>
        <taxon>Gammaproteobacteria</taxon>
        <taxon>Pasteurellales</taxon>
        <taxon>Pasteurellaceae</taxon>
        <taxon>Aggregatibacter</taxon>
    </lineage>
</organism>
<keyword id="KW-0963">Cytoplasm</keyword>
<keyword id="KW-0520">NAD</keyword>
<keyword id="KW-0808">Transferase</keyword>
<sequence length="208" mass="22861">MKPICVVLSGAGISAESGIPTYRAEDGLWAGHKIEDVCTPEALQRNRKQVLAFYNERRRNCAEAKPNAAHKVLVELERSYNVQIITQNVEDLHERAGSTNVLHLHGELTKARSSFDPDYIVPCMGDQSVNDKDPNGHPMRPHIVFFGESVPVLEPAIDLVSQADIVLVIGTSLQVYPANGLVNEAPKNAQIYLIDPNPNTGFNPVTGW</sequence>
<accession>Q9ZAB8</accession>
<feature type="chain" id="PRO_0000110285" description="NAD-dependent protein deacylase">
    <location>
        <begin position="1"/>
        <end position="208"/>
    </location>
</feature>
<feature type="domain" description="Deacetylase sirtuin-type" evidence="2">
    <location>
        <begin position="1"/>
        <end position="208"/>
    </location>
</feature>
<feature type="active site" description="Proton acceptor" evidence="1">
    <location>
        <position position="105"/>
    </location>
</feature>
<feature type="binding site" evidence="1">
    <location>
        <begin position="10"/>
        <end position="29"/>
    </location>
    <ligand>
        <name>NAD(+)</name>
        <dbReference type="ChEBI" id="CHEBI:57540"/>
    </ligand>
</feature>
<feature type="binding site" evidence="1">
    <location>
        <position position="54"/>
    </location>
    <ligand>
        <name>substrate</name>
    </ligand>
</feature>
<feature type="binding site" evidence="1">
    <location>
        <position position="57"/>
    </location>
    <ligand>
        <name>substrate</name>
    </ligand>
</feature>
<feature type="binding site" evidence="1">
    <location>
        <begin position="87"/>
        <end position="90"/>
    </location>
    <ligand>
        <name>NAD(+)</name>
        <dbReference type="ChEBI" id="CHEBI:57540"/>
    </ligand>
</feature>
<feature type="binding site" evidence="1">
    <location>
        <begin position="170"/>
        <end position="172"/>
    </location>
    <ligand>
        <name>NAD(+)</name>
        <dbReference type="ChEBI" id="CHEBI:57540"/>
    </ligand>
</feature>
<feature type="binding site" evidence="1">
    <location>
        <begin position="197"/>
        <end position="199"/>
    </location>
    <ligand>
        <name>NAD(+)</name>
        <dbReference type="ChEBI" id="CHEBI:57540"/>
    </ligand>
</feature>
<comment type="function">
    <text evidence="1">NAD-dependent lysine deacetylase and desuccinylase that specifically removes acetyl and succinyl groups on target proteins. Modulates the activities of several proteins which are inactive in their acylated form.</text>
</comment>
<comment type="catalytic activity">
    <reaction evidence="1">
        <text>N(6)-acetyl-L-lysyl-[protein] + NAD(+) + H2O = 2''-O-acetyl-ADP-D-ribose + nicotinamide + L-lysyl-[protein]</text>
        <dbReference type="Rhea" id="RHEA:43636"/>
        <dbReference type="Rhea" id="RHEA-COMP:9752"/>
        <dbReference type="Rhea" id="RHEA-COMP:10731"/>
        <dbReference type="ChEBI" id="CHEBI:15377"/>
        <dbReference type="ChEBI" id="CHEBI:17154"/>
        <dbReference type="ChEBI" id="CHEBI:29969"/>
        <dbReference type="ChEBI" id="CHEBI:57540"/>
        <dbReference type="ChEBI" id="CHEBI:61930"/>
        <dbReference type="ChEBI" id="CHEBI:83767"/>
        <dbReference type="EC" id="2.3.1.286"/>
    </reaction>
</comment>
<comment type="catalytic activity">
    <reaction evidence="1">
        <text>N(6)-succinyl-L-lysyl-[protein] + NAD(+) + H2O = 2''-O-succinyl-ADP-D-ribose + nicotinamide + L-lysyl-[protein]</text>
        <dbReference type="Rhea" id="RHEA:47668"/>
        <dbReference type="Rhea" id="RHEA-COMP:9752"/>
        <dbReference type="Rhea" id="RHEA-COMP:11877"/>
        <dbReference type="ChEBI" id="CHEBI:15377"/>
        <dbReference type="ChEBI" id="CHEBI:17154"/>
        <dbReference type="ChEBI" id="CHEBI:29969"/>
        <dbReference type="ChEBI" id="CHEBI:57540"/>
        <dbReference type="ChEBI" id="CHEBI:87830"/>
        <dbReference type="ChEBI" id="CHEBI:87832"/>
    </reaction>
</comment>
<comment type="subcellular location">
    <subcellularLocation>
        <location evidence="1">Cytoplasm</location>
    </subcellularLocation>
</comment>
<comment type="domain">
    <text evidence="1">2 residues (Tyr-54 and Arg-57) present in a large hydrophobic pocket are probably involved in substrate specificity. They are important for desuccinylation activity, but dispensable for deacetylation activity.</text>
</comment>
<comment type="similarity">
    <text evidence="1">Belongs to the sirtuin family. Class III subfamily.</text>
</comment>
<proteinExistence type="inferred from homology"/>
<gene>
    <name evidence="1" type="primary">cobB</name>
</gene>
<evidence type="ECO:0000255" key="1">
    <source>
        <dbReference type="HAMAP-Rule" id="MF_01121"/>
    </source>
</evidence>
<evidence type="ECO:0000255" key="2">
    <source>
        <dbReference type="PROSITE-ProRule" id="PRU00236"/>
    </source>
</evidence>
<dbReference type="EC" id="2.3.1.286" evidence="1"/>
<dbReference type="EMBL" id="AF006830">
    <property type="protein sequence ID" value="AAC70895.1"/>
    <property type="molecule type" value="Genomic_DNA"/>
</dbReference>
<dbReference type="RefSeq" id="WP_005567795.1">
    <property type="nucleotide sequence ID" value="NZ_JAJHPH010000001.1"/>
</dbReference>
<dbReference type="SMR" id="Q9ZAB8"/>
<dbReference type="STRING" id="714.ACT75_02575"/>
<dbReference type="eggNOG" id="COG0846">
    <property type="taxonomic scope" value="Bacteria"/>
</dbReference>
<dbReference type="GO" id="GO:0005737">
    <property type="term" value="C:cytoplasm"/>
    <property type="evidence" value="ECO:0007669"/>
    <property type="project" value="UniProtKB-SubCell"/>
</dbReference>
<dbReference type="GO" id="GO:0017136">
    <property type="term" value="F:histone deacetylase activity, NAD-dependent"/>
    <property type="evidence" value="ECO:0007669"/>
    <property type="project" value="TreeGrafter"/>
</dbReference>
<dbReference type="GO" id="GO:0070403">
    <property type="term" value="F:NAD+ binding"/>
    <property type="evidence" value="ECO:0007669"/>
    <property type="project" value="UniProtKB-UniRule"/>
</dbReference>
<dbReference type="GO" id="GO:0036054">
    <property type="term" value="F:protein-malonyllysine demalonylase activity"/>
    <property type="evidence" value="ECO:0007669"/>
    <property type="project" value="InterPro"/>
</dbReference>
<dbReference type="GO" id="GO:0036055">
    <property type="term" value="F:protein-succinyllysine desuccinylase activity"/>
    <property type="evidence" value="ECO:0007669"/>
    <property type="project" value="UniProtKB-UniRule"/>
</dbReference>
<dbReference type="Gene3D" id="3.30.1600.10">
    <property type="entry name" value="SIR2/SIRT2 'Small Domain"/>
    <property type="match status" value="1"/>
</dbReference>
<dbReference type="Gene3D" id="3.40.50.1220">
    <property type="entry name" value="TPP-binding domain"/>
    <property type="match status" value="1"/>
</dbReference>
<dbReference type="HAMAP" id="MF_01121">
    <property type="entry name" value="Sirtuin_ClassIII"/>
    <property type="match status" value="1"/>
</dbReference>
<dbReference type="InterPro" id="IPR029035">
    <property type="entry name" value="DHS-like_NAD/FAD-binding_dom"/>
</dbReference>
<dbReference type="InterPro" id="IPR050134">
    <property type="entry name" value="NAD-dep_sirtuin_deacylases"/>
</dbReference>
<dbReference type="InterPro" id="IPR003000">
    <property type="entry name" value="Sirtuin"/>
</dbReference>
<dbReference type="InterPro" id="IPR026591">
    <property type="entry name" value="Sirtuin_cat_small_dom_sf"/>
</dbReference>
<dbReference type="InterPro" id="IPR027546">
    <property type="entry name" value="Sirtuin_class_III"/>
</dbReference>
<dbReference type="InterPro" id="IPR026590">
    <property type="entry name" value="Ssirtuin_cat_dom"/>
</dbReference>
<dbReference type="PANTHER" id="PTHR11085:SF4">
    <property type="entry name" value="NAD-DEPENDENT PROTEIN DEACYLASE"/>
    <property type="match status" value="1"/>
</dbReference>
<dbReference type="PANTHER" id="PTHR11085">
    <property type="entry name" value="NAD-DEPENDENT PROTEIN DEACYLASE SIRTUIN-5, MITOCHONDRIAL-RELATED"/>
    <property type="match status" value="1"/>
</dbReference>
<dbReference type="Pfam" id="PF02146">
    <property type="entry name" value="SIR2"/>
    <property type="match status" value="1"/>
</dbReference>
<dbReference type="SUPFAM" id="SSF52467">
    <property type="entry name" value="DHS-like NAD/FAD-binding domain"/>
    <property type="match status" value="1"/>
</dbReference>
<dbReference type="PROSITE" id="PS50305">
    <property type="entry name" value="SIRTUIN"/>
    <property type="match status" value="1"/>
</dbReference>
<name>NPD_AGGAC</name>
<protein>
    <recommendedName>
        <fullName evidence="1">NAD-dependent protein deacylase</fullName>
        <ecNumber evidence="1">2.3.1.286</ecNumber>
    </recommendedName>
    <alternativeName>
        <fullName evidence="1">Regulatory protein SIR2 homolog</fullName>
    </alternativeName>
</protein>
<reference key="1">
    <citation type="journal article" date="1999" name="Infect. Immun.">
        <title>Identification of a cytolethal distending toxin gene locus and features of a virulence-associated region in Actinobacillus actinomycetemcomitans.</title>
        <authorList>
            <person name="Mayer M.P."/>
            <person name="Bueno L.C."/>
            <person name="Hansen E.J."/>
            <person name="DiRienzo J.M."/>
        </authorList>
    </citation>
    <scope>NUCLEOTIDE SEQUENCE [GENOMIC DNA]</scope>
    <source>
        <strain>ATCC 43718 / FDC Y4 / Serotype b</strain>
    </source>
</reference>